<proteinExistence type="inferred from homology"/>
<name>RL24_CERS4</name>
<organism>
    <name type="scientific">Cereibacter sphaeroides (strain ATCC 17023 / DSM 158 / JCM 6121 / CCUG 31486 / LMG 2827 / NBRC 12203 / NCIMB 8253 / ATH 2.4.1.)</name>
    <name type="common">Rhodobacter sphaeroides</name>
    <dbReference type="NCBI Taxonomy" id="272943"/>
    <lineage>
        <taxon>Bacteria</taxon>
        <taxon>Pseudomonadati</taxon>
        <taxon>Pseudomonadota</taxon>
        <taxon>Alphaproteobacteria</taxon>
        <taxon>Rhodobacterales</taxon>
        <taxon>Paracoccaceae</taxon>
        <taxon>Cereibacter</taxon>
    </lineage>
</organism>
<reference key="1">
    <citation type="submission" date="2005-09" db="EMBL/GenBank/DDBJ databases">
        <title>Complete sequence of chromosome 1 of Rhodobacter sphaeroides 2.4.1.</title>
        <authorList>
            <person name="Copeland A."/>
            <person name="Lucas S."/>
            <person name="Lapidus A."/>
            <person name="Barry K."/>
            <person name="Detter J.C."/>
            <person name="Glavina T."/>
            <person name="Hammon N."/>
            <person name="Israni S."/>
            <person name="Pitluck S."/>
            <person name="Richardson P."/>
            <person name="Mackenzie C."/>
            <person name="Choudhary M."/>
            <person name="Larimer F."/>
            <person name="Hauser L.J."/>
            <person name="Land M."/>
            <person name="Donohue T.J."/>
            <person name="Kaplan S."/>
        </authorList>
    </citation>
    <scope>NUCLEOTIDE SEQUENCE [LARGE SCALE GENOMIC DNA]</scope>
    <source>
        <strain>ATCC 17023 / DSM 158 / JCM 6121 / CCUG 31486 / LMG 2827 / NBRC 12203 / NCIMB 8253 / ATH 2.4.1.</strain>
    </source>
</reference>
<gene>
    <name evidence="1" type="primary">rplX</name>
    <name type="ordered locus">RHOS4_03050</name>
    <name type="ORF">RSP_1726</name>
</gene>
<protein>
    <recommendedName>
        <fullName evidence="1">Large ribosomal subunit protein uL24</fullName>
    </recommendedName>
    <alternativeName>
        <fullName evidence="2">50S ribosomal protein L24</fullName>
    </alternativeName>
</protein>
<evidence type="ECO:0000255" key="1">
    <source>
        <dbReference type="HAMAP-Rule" id="MF_01326"/>
    </source>
</evidence>
<evidence type="ECO:0000305" key="2"/>
<sequence length="101" mass="10759">MAAKLKKGDRVVVLAGKDKGKQGEITAVMPKDNKAVVEGVNVAIRHTKQTPTAQGGRLAKAMPIDLSNLALLDANGKATRVGFRFEGEKKVRYAKTTGDVI</sequence>
<dbReference type="EMBL" id="CP000143">
    <property type="protein sequence ID" value="ABA77873.1"/>
    <property type="molecule type" value="Genomic_DNA"/>
</dbReference>
<dbReference type="RefSeq" id="WP_002722510.1">
    <property type="nucleotide sequence ID" value="NZ_CP030271.1"/>
</dbReference>
<dbReference type="RefSeq" id="YP_351774.1">
    <property type="nucleotide sequence ID" value="NC_007493.2"/>
</dbReference>
<dbReference type="SMR" id="Q3J5R1"/>
<dbReference type="STRING" id="272943.RSP_1726"/>
<dbReference type="EnsemblBacteria" id="ABA77873">
    <property type="protein sequence ID" value="ABA77873"/>
    <property type="gene ID" value="RSP_1726"/>
</dbReference>
<dbReference type="GeneID" id="67445511"/>
<dbReference type="KEGG" id="rsp:RSP_1726"/>
<dbReference type="PATRIC" id="fig|272943.9.peg.604"/>
<dbReference type="eggNOG" id="COG0198">
    <property type="taxonomic scope" value="Bacteria"/>
</dbReference>
<dbReference type="OrthoDB" id="9807419at2"/>
<dbReference type="PhylomeDB" id="Q3J5R1"/>
<dbReference type="Proteomes" id="UP000002703">
    <property type="component" value="Chromosome 1"/>
</dbReference>
<dbReference type="GO" id="GO:1990904">
    <property type="term" value="C:ribonucleoprotein complex"/>
    <property type="evidence" value="ECO:0007669"/>
    <property type="project" value="UniProtKB-KW"/>
</dbReference>
<dbReference type="GO" id="GO:0005840">
    <property type="term" value="C:ribosome"/>
    <property type="evidence" value="ECO:0007669"/>
    <property type="project" value="UniProtKB-KW"/>
</dbReference>
<dbReference type="GO" id="GO:0019843">
    <property type="term" value="F:rRNA binding"/>
    <property type="evidence" value="ECO:0007669"/>
    <property type="project" value="UniProtKB-UniRule"/>
</dbReference>
<dbReference type="GO" id="GO:0003735">
    <property type="term" value="F:structural constituent of ribosome"/>
    <property type="evidence" value="ECO:0007669"/>
    <property type="project" value="InterPro"/>
</dbReference>
<dbReference type="GO" id="GO:0006412">
    <property type="term" value="P:translation"/>
    <property type="evidence" value="ECO:0007669"/>
    <property type="project" value="UniProtKB-UniRule"/>
</dbReference>
<dbReference type="CDD" id="cd06089">
    <property type="entry name" value="KOW_RPL26"/>
    <property type="match status" value="1"/>
</dbReference>
<dbReference type="Gene3D" id="2.30.30.30">
    <property type="match status" value="1"/>
</dbReference>
<dbReference type="HAMAP" id="MF_01326_B">
    <property type="entry name" value="Ribosomal_uL24_B"/>
    <property type="match status" value="1"/>
</dbReference>
<dbReference type="InterPro" id="IPR005824">
    <property type="entry name" value="KOW"/>
</dbReference>
<dbReference type="InterPro" id="IPR014722">
    <property type="entry name" value="Rib_uL2_dom2"/>
</dbReference>
<dbReference type="InterPro" id="IPR003256">
    <property type="entry name" value="Ribosomal_uL24"/>
</dbReference>
<dbReference type="InterPro" id="IPR005825">
    <property type="entry name" value="Ribosomal_uL24_CS"/>
</dbReference>
<dbReference type="InterPro" id="IPR041988">
    <property type="entry name" value="Ribosomal_uL24_KOW"/>
</dbReference>
<dbReference type="InterPro" id="IPR008991">
    <property type="entry name" value="Translation_prot_SH3-like_sf"/>
</dbReference>
<dbReference type="NCBIfam" id="TIGR01079">
    <property type="entry name" value="rplX_bact"/>
    <property type="match status" value="1"/>
</dbReference>
<dbReference type="PANTHER" id="PTHR12903">
    <property type="entry name" value="MITOCHONDRIAL RIBOSOMAL PROTEIN L24"/>
    <property type="match status" value="1"/>
</dbReference>
<dbReference type="Pfam" id="PF00467">
    <property type="entry name" value="KOW"/>
    <property type="match status" value="1"/>
</dbReference>
<dbReference type="Pfam" id="PF17136">
    <property type="entry name" value="ribosomal_L24"/>
    <property type="match status" value="1"/>
</dbReference>
<dbReference type="SMART" id="SM00739">
    <property type="entry name" value="KOW"/>
    <property type="match status" value="1"/>
</dbReference>
<dbReference type="SUPFAM" id="SSF50104">
    <property type="entry name" value="Translation proteins SH3-like domain"/>
    <property type="match status" value="1"/>
</dbReference>
<dbReference type="PROSITE" id="PS01108">
    <property type="entry name" value="RIBOSOMAL_L24"/>
    <property type="match status" value="1"/>
</dbReference>
<feature type="chain" id="PRO_0000241649" description="Large ribosomal subunit protein uL24">
    <location>
        <begin position="1"/>
        <end position="101"/>
    </location>
</feature>
<comment type="function">
    <text evidence="1">One of two assembly initiator proteins, it binds directly to the 5'-end of the 23S rRNA, where it nucleates assembly of the 50S subunit.</text>
</comment>
<comment type="function">
    <text evidence="1">One of the proteins that surrounds the polypeptide exit tunnel on the outside of the subunit.</text>
</comment>
<comment type="subunit">
    <text evidence="1">Part of the 50S ribosomal subunit.</text>
</comment>
<comment type="similarity">
    <text evidence="1">Belongs to the universal ribosomal protein uL24 family.</text>
</comment>
<accession>Q3J5R1</accession>
<keyword id="KW-1185">Reference proteome</keyword>
<keyword id="KW-0687">Ribonucleoprotein</keyword>
<keyword id="KW-0689">Ribosomal protein</keyword>
<keyword id="KW-0694">RNA-binding</keyword>
<keyword id="KW-0699">rRNA-binding</keyword>